<dbReference type="EC" id="2.1.2.1" evidence="1"/>
<dbReference type="EMBL" id="AL591688">
    <property type="protein sequence ID" value="CAC45787.1"/>
    <property type="molecule type" value="Genomic_DNA"/>
</dbReference>
<dbReference type="RefSeq" id="NP_385314.1">
    <property type="nucleotide sequence ID" value="NC_003047.1"/>
</dbReference>
<dbReference type="SMR" id="Q92QU6"/>
<dbReference type="EnsemblBacteria" id="CAC45787">
    <property type="protein sequence ID" value="CAC45787"/>
    <property type="gene ID" value="SMc01770"/>
</dbReference>
<dbReference type="KEGG" id="sme:SMc01770"/>
<dbReference type="PATRIC" id="fig|266834.11.peg.2620"/>
<dbReference type="eggNOG" id="COG0112">
    <property type="taxonomic scope" value="Bacteria"/>
</dbReference>
<dbReference type="HOGENOM" id="CLU_022477_2_1_5"/>
<dbReference type="OrthoDB" id="9803846at2"/>
<dbReference type="BioCyc" id="MetaCyc:MONOMER-8567"/>
<dbReference type="UniPathway" id="UPA00193"/>
<dbReference type="UniPathway" id="UPA00288">
    <property type="reaction ID" value="UER01023"/>
</dbReference>
<dbReference type="Proteomes" id="UP000001976">
    <property type="component" value="Chromosome"/>
</dbReference>
<dbReference type="GO" id="GO:0005829">
    <property type="term" value="C:cytosol"/>
    <property type="evidence" value="ECO:0007669"/>
    <property type="project" value="TreeGrafter"/>
</dbReference>
<dbReference type="GO" id="GO:0004372">
    <property type="term" value="F:glycine hydroxymethyltransferase activity"/>
    <property type="evidence" value="ECO:0007669"/>
    <property type="project" value="UniProtKB-UniRule"/>
</dbReference>
<dbReference type="GO" id="GO:0030170">
    <property type="term" value="F:pyridoxal phosphate binding"/>
    <property type="evidence" value="ECO:0007669"/>
    <property type="project" value="UniProtKB-UniRule"/>
</dbReference>
<dbReference type="GO" id="GO:0019264">
    <property type="term" value="P:glycine biosynthetic process from serine"/>
    <property type="evidence" value="ECO:0007669"/>
    <property type="project" value="UniProtKB-UniRule"/>
</dbReference>
<dbReference type="GO" id="GO:0035999">
    <property type="term" value="P:tetrahydrofolate interconversion"/>
    <property type="evidence" value="ECO:0007669"/>
    <property type="project" value="UniProtKB-UniRule"/>
</dbReference>
<dbReference type="CDD" id="cd00378">
    <property type="entry name" value="SHMT"/>
    <property type="match status" value="1"/>
</dbReference>
<dbReference type="FunFam" id="3.40.640.10:FF:000001">
    <property type="entry name" value="Serine hydroxymethyltransferase"/>
    <property type="match status" value="1"/>
</dbReference>
<dbReference type="FunFam" id="3.90.1150.10:FF:000003">
    <property type="entry name" value="Serine hydroxymethyltransferase"/>
    <property type="match status" value="1"/>
</dbReference>
<dbReference type="Gene3D" id="3.90.1150.10">
    <property type="entry name" value="Aspartate Aminotransferase, domain 1"/>
    <property type="match status" value="1"/>
</dbReference>
<dbReference type="Gene3D" id="3.40.640.10">
    <property type="entry name" value="Type I PLP-dependent aspartate aminotransferase-like (Major domain)"/>
    <property type="match status" value="1"/>
</dbReference>
<dbReference type="HAMAP" id="MF_00051">
    <property type="entry name" value="SHMT"/>
    <property type="match status" value="1"/>
</dbReference>
<dbReference type="InterPro" id="IPR015424">
    <property type="entry name" value="PyrdxlP-dep_Trfase"/>
</dbReference>
<dbReference type="InterPro" id="IPR015421">
    <property type="entry name" value="PyrdxlP-dep_Trfase_major"/>
</dbReference>
<dbReference type="InterPro" id="IPR015422">
    <property type="entry name" value="PyrdxlP-dep_Trfase_small"/>
</dbReference>
<dbReference type="InterPro" id="IPR001085">
    <property type="entry name" value="Ser_HO-MeTrfase"/>
</dbReference>
<dbReference type="InterPro" id="IPR049943">
    <property type="entry name" value="Ser_HO-MeTrfase-like"/>
</dbReference>
<dbReference type="InterPro" id="IPR019798">
    <property type="entry name" value="Ser_HO-MeTrfase_PLP_BS"/>
</dbReference>
<dbReference type="InterPro" id="IPR039429">
    <property type="entry name" value="SHMT-like_dom"/>
</dbReference>
<dbReference type="NCBIfam" id="NF000586">
    <property type="entry name" value="PRK00011.1"/>
    <property type="match status" value="1"/>
</dbReference>
<dbReference type="PANTHER" id="PTHR11680">
    <property type="entry name" value="SERINE HYDROXYMETHYLTRANSFERASE"/>
    <property type="match status" value="1"/>
</dbReference>
<dbReference type="PANTHER" id="PTHR11680:SF35">
    <property type="entry name" value="SERINE HYDROXYMETHYLTRANSFERASE 1"/>
    <property type="match status" value="1"/>
</dbReference>
<dbReference type="Pfam" id="PF00464">
    <property type="entry name" value="SHMT"/>
    <property type="match status" value="1"/>
</dbReference>
<dbReference type="PIRSF" id="PIRSF000412">
    <property type="entry name" value="SHMT"/>
    <property type="match status" value="1"/>
</dbReference>
<dbReference type="SUPFAM" id="SSF53383">
    <property type="entry name" value="PLP-dependent transferases"/>
    <property type="match status" value="1"/>
</dbReference>
<dbReference type="PROSITE" id="PS00096">
    <property type="entry name" value="SHMT"/>
    <property type="match status" value="1"/>
</dbReference>
<gene>
    <name evidence="1" type="primary">glyA1</name>
    <name type="ordered locus">R01208</name>
    <name type="ORF">SMc01770</name>
</gene>
<comment type="function">
    <text evidence="1">Catalyzes the reversible interconversion of serine and glycine with tetrahydrofolate (THF) serving as the one-carbon carrier. This reaction serves as the major source of one-carbon groups required for the biosynthesis of purines, thymidylate, methionine, and other important biomolecules. Also exhibits THF-independent aldolase activity toward beta-hydroxyamino acids, producing glycine and aldehydes, via a retro-aldol mechanism.</text>
</comment>
<comment type="catalytic activity">
    <reaction evidence="1">
        <text>(6R)-5,10-methylene-5,6,7,8-tetrahydrofolate + glycine + H2O = (6S)-5,6,7,8-tetrahydrofolate + L-serine</text>
        <dbReference type="Rhea" id="RHEA:15481"/>
        <dbReference type="ChEBI" id="CHEBI:15377"/>
        <dbReference type="ChEBI" id="CHEBI:15636"/>
        <dbReference type="ChEBI" id="CHEBI:33384"/>
        <dbReference type="ChEBI" id="CHEBI:57305"/>
        <dbReference type="ChEBI" id="CHEBI:57453"/>
        <dbReference type="EC" id="2.1.2.1"/>
    </reaction>
</comment>
<comment type="cofactor">
    <cofactor evidence="1">
        <name>pyridoxal 5'-phosphate</name>
        <dbReference type="ChEBI" id="CHEBI:597326"/>
    </cofactor>
</comment>
<comment type="pathway">
    <text evidence="1">One-carbon metabolism; tetrahydrofolate interconversion.</text>
</comment>
<comment type="pathway">
    <text evidence="1">Amino-acid biosynthesis; glycine biosynthesis; glycine from L-serine: step 1/1.</text>
</comment>
<comment type="subunit">
    <text evidence="1">Homodimer.</text>
</comment>
<comment type="subcellular location">
    <subcellularLocation>
        <location evidence="1">Cytoplasm</location>
    </subcellularLocation>
</comment>
<comment type="similarity">
    <text evidence="1">Belongs to the SHMT family.</text>
</comment>
<proteinExistence type="inferred from homology"/>
<keyword id="KW-0028">Amino-acid biosynthesis</keyword>
<keyword id="KW-0963">Cytoplasm</keyword>
<keyword id="KW-0554">One-carbon metabolism</keyword>
<keyword id="KW-0663">Pyridoxal phosphate</keyword>
<keyword id="KW-1185">Reference proteome</keyword>
<keyword id="KW-0808">Transferase</keyword>
<sequence>MLSQTNDAFFTRSLADSDPEIFGAIEKELGRQRHEIELIASENIVSRAVLEAQGSIMTNKYAEGYPGKRYYGGCQYVDIAEALAIERAKKLFGVNFANVQPNSGSQMNQAVFLALLQPGDTFMGLDLNSGGHLTHGSPVNMSGKWFNVVSYGVREDDHLLDMDEVARKAREQKPKLIIAGGTAYSRIWDWKRFREIADEVGAWLMVDMAHIAGLVAGGQHPSPFPHCHVATTTTHKSLRGPRGGMILTNDEEIAKKINSAVFPGLQGGPLMHVIAAKAVALGEALQPSFKDYAAQVVKNARTLAETLKANGLDIVSGGTDNHLMLVDLRKKNATGKRAEAALGRAYVTCNKNGIPFDPEKPFVTSGVRLGAPAGTTRGFKEAEFKEVGELIVEVLDGLKAANSDEGNAAVEAGVREKVIKLTDRFPMYGYM</sequence>
<reference key="1">
    <citation type="journal article" date="2001" name="Proc. Natl. Acad. Sci. U.S.A.">
        <title>Analysis of the chromosome sequence of the legume symbiont Sinorhizobium meliloti strain 1021.</title>
        <authorList>
            <person name="Capela D."/>
            <person name="Barloy-Hubler F."/>
            <person name="Gouzy J."/>
            <person name="Bothe G."/>
            <person name="Ampe F."/>
            <person name="Batut J."/>
            <person name="Boistard P."/>
            <person name="Becker A."/>
            <person name="Boutry M."/>
            <person name="Cadieu E."/>
            <person name="Dreano S."/>
            <person name="Gloux S."/>
            <person name="Godrie T."/>
            <person name="Goffeau A."/>
            <person name="Kahn D."/>
            <person name="Kiss E."/>
            <person name="Lelaure V."/>
            <person name="Masuy D."/>
            <person name="Pohl T."/>
            <person name="Portetelle D."/>
            <person name="Puehler A."/>
            <person name="Purnelle B."/>
            <person name="Ramsperger U."/>
            <person name="Renard C."/>
            <person name="Thebault P."/>
            <person name="Vandenbol M."/>
            <person name="Weidner S."/>
            <person name="Galibert F."/>
        </authorList>
    </citation>
    <scope>NUCLEOTIDE SEQUENCE [LARGE SCALE GENOMIC DNA]</scope>
    <source>
        <strain>1021</strain>
    </source>
</reference>
<reference key="2">
    <citation type="journal article" date="2001" name="Science">
        <title>The composite genome of the legume symbiont Sinorhizobium meliloti.</title>
        <authorList>
            <person name="Galibert F."/>
            <person name="Finan T.M."/>
            <person name="Long S.R."/>
            <person name="Puehler A."/>
            <person name="Abola P."/>
            <person name="Ampe F."/>
            <person name="Barloy-Hubler F."/>
            <person name="Barnett M.J."/>
            <person name="Becker A."/>
            <person name="Boistard P."/>
            <person name="Bothe G."/>
            <person name="Boutry M."/>
            <person name="Bowser L."/>
            <person name="Buhrmester J."/>
            <person name="Cadieu E."/>
            <person name="Capela D."/>
            <person name="Chain P."/>
            <person name="Cowie A."/>
            <person name="Davis R.W."/>
            <person name="Dreano S."/>
            <person name="Federspiel N.A."/>
            <person name="Fisher R.F."/>
            <person name="Gloux S."/>
            <person name="Godrie T."/>
            <person name="Goffeau A."/>
            <person name="Golding B."/>
            <person name="Gouzy J."/>
            <person name="Gurjal M."/>
            <person name="Hernandez-Lucas I."/>
            <person name="Hong A."/>
            <person name="Huizar L."/>
            <person name="Hyman R.W."/>
            <person name="Jones T."/>
            <person name="Kahn D."/>
            <person name="Kahn M.L."/>
            <person name="Kalman S."/>
            <person name="Keating D.H."/>
            <person name="Kiss E."/>
            <person name="Komp C."/>
            <person name="Lelaure V."/>
            <person name="Masuy D."/>
            <person name="Palm C."/>
            <person name="Peck M.C."/>
            <person name="Pohl T.M."/>
            <person name="Portetelle D."/>
            <person name="Purnelle B."/>
            <person name="Ramsperger U."/>
            <person name="Surzycki R."/>
            <person name="Thebault P."/>
            <person name="Vandenbol M."/>
            <person name="Vorhoelter F.J."/>
            <person name="Weidner S."/>
            <person name="Wells D.H."/>
            <person name="Wong K."/>
            <person name="Yeh K.-C."/>
            <person name="Batut J."/>
        </authorList>
    </citation>
    <scope>NUCLEOTIDE SEQUENCE [LARGE SCALE GENOMIC DNA]</scope>
    <source>
        <strain>1021</strain>
    </source>
</reference>
<feature type="chain" id="PRO_0000113648" description="Serine hydroxymethyltransferase 1">
    <location>
        <begin position="1"/>
        <end position="431"/>
    </location>
</feature>
<feature type="binding site" evidence="1">
    <location>
        <position position="127"/>
    </location>
    <ligand>
        <name>(6S)-5,6,7,8-tetrahydrofolate</name>
        <dbReference type="ChEBI" id="CHEBI:57453"/>
    </ligand>
</feature>
<feature type="binding site" evidence="1">
    <location>
        <begin position="131"/>
        <end position="133"/>
    </location>
    <ligand>
        <name>(6S)-5,6,7,8-tetrahydrofolate</name>
        <dbReference type="ChEBI" id="CHEBI:57453"/>
    </ligand>
</feature>
<feature type="binding site" evidence="1">
    <location>
        <position position="252"/>
    </location>
    <ligand>
        <name>(6S)-5,6,7,8-tetrahydrofolate</name>
        <dbReference type="ChEBI" id="CHEBI:57453"/>
    </ligand>
</feature>
<feature type="site" description="Plays an important role in substrate specificity" evidence="1">
    <location>
        <position position="235"/>
    </location>
</feature>
<feature type="modified residue" description="N6-(pyridoxal phosphate)lysine" evidence="1">
    <location>
        <position position="236"/>
    </location>
</feature>
<protein>
    <recommendedName>
        <fullName evidence="1">Serine hydroxymethyltransferase 1</fullName>
        <shortName evidence="1">SHMT 1</shortName>
        <shortName evidence="1">Serine methylase 1</shortName>
        <ecNumber evidence="1">2.1.2.1</ecNumber>
    </recommendedName>
</protein>
<evidence type="ECO:0000255" key="1">
    <source>
        <dbReference type="HAMAP-Rule" id="MF_00051"/>
    </source>
</evidence>
<organism>
    <name type="scientific">Rhizobium meliloti (strain 1021)</name>
    <name type="common">Ensifer meliloti</name>
    <name type="synonym">Sinorhizobium meliloti</name>
    <dbReference type="NCBI Taxonomy" id="266834"/>
    <lineage>
        <taxon>Bacteria</taxon>
        <taxon>Pseudomonadati</taxon>
        <taxon>Pseudomonadota</taxon>
        <taxon>Alphaproteobacteria</taxon>
        <taxon>Hyphomicrobiales</taxon>
        <taxon>Rhizobiaceae</taxon>
        <taxon>Sinorhizobium/Ensifer group</taxon>
        <taxon>Sinorhizobium</taxon>
    </lineage>
</organism>
<name>GLYA1_RHIME</name>
<accession>Q92QU6</accession>